<feature type="peptide" id="PRO_0000366037" description="Brevinin-2HSa">
    <location>
        <begin position="1"/>
        <end position="33"/>
    </location>
</feature>
<feature type="disulfide bond">
    <location>
        <begin position="27"/>
        <end position="33"/>
    </location>
</feature>
<keyword id="KW-0878">Amphibian defense peptide</keyword>
<keyword id="KW-0044">Antibiotic</keyword>
<keyword id="KW-0929">Antimicrobial</keyword>
<keyword id="KW-0903">Direct protein sequencing</keyword>
<keyword id="KW-1015">Disulfide bond</keyword>
<keyword id="KW-0964">Secreted</keyword>
<name>BR2A_ODOHO</name>
<sequence>GLLDSLKNLAINAAKGAGQSVLNTLSCKLSKTC</sequence>
<reference key="1">
    <citation type="journal article" date="2008" name="Toxicon">
        <title>Characterization of antimicrobial peptides from the skin secretions of the Malaysian frogs, Odorrana hosii and Hylarana picturata (Anura:Ranidae).</title>
        <authorList>
            <person name="Conlon J.M."/>
            <person name="Kolodziejek J."/>
            <person name="Nowotny N."/>
            <person name="Leprince J."/>
            <person name="Vaudry H."/>
            <person name="Coquet L."/>
            <person name="Jouenne T."/>
            <person name="King J.D."/>
        </authorList>
    </citation>
    <scope>PROTEIN SEQUENCE</scope>
    <scope>FUNCTION</scope>
    <scope>MASS SPECTROMETRY</scope>
    <source>
        <tissue>Skin secretion</tissue>
    </source>
</reference>
<proteinExistence type="evidence at protein level"/>
<accession>P0C8S9</accession>
<dbReference type="SMR" id="P0C8S9"/>
<dbReference type="GO" id="GO:0005576">
    <property type="term" value="C:extracellular region"/>
    <property type="evidence" value="ECO:0007669"/>
    <property type="project" value="UniProtKB-SubCell"/>
</dbReference>
<dbReference type="GO" id="GO:0042742">
    <property type="term" value="P:defense response to bacterium"/>
    <property type="evidence" value="ECO:0007669"/>
    <property type="project" value="UniProtKB-KW"/>
</dbReference>
<dbReference type="InterPro" id="IPR012521">
    <property type="entry name" value="Antimicrobial_frog_2"/>
</dbReference>
<dbReference type="Pfam" id="PF08023">
    <property type="entry name" value="Antimicrobial_2"/>
    <property type="match status" value="1"/>
</dbReference>
<organism>
    <name type="scientific">Odorrana hosii</name>
    <name type="common">Hose's rock frog</name>
    <name type="synonym">Rana hosii</name>
    <dbReference type="NCBI Taxonomy" id="310666"/>
    <lineage>
        <taxon>Eukaryota</taxon>
        <taxon>Metazoa</taxon>
        <taxon>Chordata</taxon>
        <taxon>Craniata</taxon>
        <taxon>Vertebrata</taxon>
        <taxon>Euteleostomi</taxon>
        <taxon>Amphibia</taxon>
        <taxon>Batrachia</taxon>
        <taxon>Anura</taxon>
        <taxon>Neobatrachia</taxon>
        <taxon>Ranoidea</taxon>
        <taxon>Ranidae</taxon>
        <taxon>Odorrana</taxon>
    </lineage>
</organism>
<comment type="function">
    <text evidence="1">Has antibacterial activity against the Gram-positive bacterium S.aureus ATCC 25923 (MIC=18 uM) and the Gram-negative bacterium E.coli ATCC 25726 (MIC=36 uM).</text>
</comment>
<comment type="subcellular location">
    <subcellularLocation>
        <location>Secreted</location>
    </subcellularLocation>
</comment>
<comment type="tissue specificity">
    <text>Expressed by the skin glands.</text>
</comment>
<comment type="mass spectrometry"/>
<comment type="similarity">
    <text evidence="2">Belongs to the frog skin active peptide (FSAP) family. Brevinin subfamily.</text>
</comment>
<protein>
    <recommendedName>
        <fullName>Brevinin-2HSa</fullName>
    </recommendedName>
</protein>
<evidence type="ECO:0000269" key="1">
    <source>
    </source>
</evidence>
<evidence type="ECO:0000305" key="2"/>